<gene>
    <name evidence="4" type="ordered locus">AF_1938</name>
</gene>
<dbReference type="EC" id="6.2.1.13" evidence="2"/>
<dbReference type="EMBL" id="AE000782">
    <property type="protein sequence ID" value="AAB89317.1"/>
    <property type="molecule type" value="Genomic_DNA"/>
</dbReference>
<dbReference type="PIR" id="A69492">
    <property type="entry name" value="A69492"/>
</dbReference>
<dbReference type="RefSeq" id="WP_010879431.1">
    <property type="nucleotide sequence ID" value="NC_000917.1"/>
</dbReference>
<dbReference type="SMR" id="O28341"/>
<dbReference type="STRING" id="224325.AF_1938"/>
<dbReference type="PaxDb" id="224325-AF_1938"/>
<dbReference type="EnsemblBacteria" id="AAB89317">
    <property type="protein sequence ID" value="AAB89317"/>
    <property type="gene ID" value="AF_1938"/>
</dbReference>
<dbReference type="KEGG" id="afu:AF_1938"/>
<dbReference type="eggNOG" id="arCOG01338">
    <property type="taxonomic scope" value="Archaea"/>
</dbReference>
<dbReference type="eggNOG" id="arCOG01340">
    <property type="taxonomic scope" value="Archaea"/>
</dbReference>
<dbReference type="HOGENOM" id="CLU_007415_2_2_2"/>
<dbReference type="OrthoDB" id="50180at2157"/>
<dbReference type="PhylomeDB" id="O28341"/>
<dbReference type="BioCyc" id="MetaCyc:AF_RS09735-MONOMER"/>
<dbReference type="BRENDA" id="6.2.1.B11">
    <property type="organism ID" value="414"/>
</dbReference>
<dbReference type="SABIO-RK" id="O28341"/>
<dbReference type="Proteomes" id="UP000002199">
    <property type="component" value="Chromosome"/>
</dbReference>
<dbReference type="GO" id="GO:0043758">
    <property type="term" value="F:acetate-CoA ligase (ADP-forming) activity"/>
    <property type="evidence" value="ECO:0007669"/>
    <property type="project" value="UniProtKB-EC"/>
</dbReference>
<dbReference type="GO" id="GO:0005524">
    <property type="term" value="F:ATP binding"/>
    <property type="evidence" value="ECO:0007669"/>
    <property type="project" value="UniProtKB-KW"/>
</dbReference>
<dbReference type="GO" id="GO:0046872">
    <property type="term" value="F:metal ion binding"/>
    <property type="evidence" value="ECO:0007669"/>
    <property type="project" value="InterPro"/>
</dbReference>
<dbReference type="Gene3D" id="3.30.1490.20">
    <property type="entry name" value="ATP-grasp fold, A domain"/>
    <property type="match status" value="1"/>
</dbReference>
<dbReference type="Gene3D" id="3.30.470.20">
    <property type="entry name" value="ATP-grasp fold, B domain"/>
    <property type="match status" value="1"/>
</dbReference>
<dbReference type="Gene3D" id="3.40.50.720">
    <property type="entry name" value="NAD(P)-binding Rossmann-like Domain"/>
    <property type="match status" value="1"/>
</dbReference>
<dbReference type="Gene3D" id="3.40.50.261">
    <property type="entry name" value="Succinyl-CoA synthetase domains"/>
    <property type="match status" value="2"/>
</dbReference>
<dbReference type="InterPro" id="IPR051538">
    <property type="entry name" value="Acyl-CoA_Synth/Transferase"/>
</dbReference>
<dbReference type="InterPro" id="IPR053698">
    <property type="entry name" value="Acyl-CoA_synthetase_A/B"/>
</dbReference>
<dbReference type="InterPro" id="IPR011761">
    <property type="entry name" value="ATP-grasp"/>
</dbReference>
<dbReference type="InterPro" id="IPR013815">
    <property type="entry name" value="ATP_grasp_subdomain_1"/>
</dbReference>
<dbReference type="InterPro" id="IPR003781">
    <property type="entry name" value="CoA-bd"/>
</dbReference>
<dbReference type="InterPro" id="IPR036291">
    <property type="entry name" value="NAD(P)-bd_dom_sf"/>
</dbReference>
<dbReference type="InterPro" id="IPR032875">
    <property type="entry name" value="Succ_CoA_lig_flav_dom"/>
</dbReference>
<dbReference type="InterPro" id="IPR016102">
    <property type="entry name" value="Succinyl-CoA_synth-like"/>
</dbReference>
<dbReference type="NCBIfam" id="NF045494">
    <property type="entry name" value="AcCoALig_Archglob"/>
    <property type="match status" value="1"/>
</dbReference>
<dbReference type="PANTHER" id="PTHR43334">
    <property type="entry name" value="ACETATE--COA LIGASE [ADP-FORMING]"/>
    <property type="match status" value="1"/>
</dbReference>
<dbReference type="PANTHER" id="PTHR43334:SF2">
    <property type="entry name" value="ACETATE--COA LIGASE [ADP-FORMING]"/>
    <property type="match status" value="1"/>
</dbReference>
<dbReference type="Pfam" id="PF13549">
    <property type="entry name" value="ATP-grasp_5"/>
    <property type="match status" value="1"/>
</dbReference>
<dbReference type="Pfam" id="PF13380">
    <property type="entry name" value="CoA_binding_2"/>
    <property type="match status" value="1"/>
</dbReference>
<dbReference type="Pfam" id="PF13607">
    <property type="entry name" value="Succ_CoA_lig"/>
    <property type="match status" value="1"/>
</dbReference>
<dbReference type="SMART" id="SM00881">
    <property type="entry name" value="CoA_binding"/>
    <property type="match status" value="1"/>
</dbReference>
<dbReference type="SUPFAM" id="SSF56059">
    <property type="entry name" value="Glutathione synthetase ATP-binding domain-like"/>
    <property type="match status" value="1"/>
</dbReference>
<dbReference type="SUPFAM" id="SSF51735">
    <property type="entry name" value="NAD(P)-binding Rossmann-fold domains"/>
    <property type="match status" value="1"/>
</dbReference>
<dbReference type="SUPFAM" id="SSF52210">
    <property type="entry name" value="Succinyl-CoA synthetase domains"/>
    <property type="match status" value="2"/>
</dbReference>
<dbReference type="PROSITE" id="PS50975">
    <property type="entry name" value="ATP_GRASP"/>
    <property type="match status" value="1"/>
</dbReference>
<reference key="1">
    <citation type="journal article" date="1997" name="Nature">
        <title>The complete genome sequence of the hyperthermophilic, sulphate-reducing archaeon Archaeoglobus fulgidus.</title>
        <authorList>
            <person name="Klenk H.-P."/>
            <person name="Clayton R.A."/>
            <person name="Tomb J.-F."/>
            <person name="White O."/>
            <person name="Nelson K.E."/>
            <person name="Ketchum K.A."/>
            <person name="Dodson R.J."/>
            <person name="Gwinn M.L."/>
            <person name="Hickey E.K."/>
            <person name="Peterson J.D."/>
            <person name="Richardson D.L."/>
            <person name="Kerlavage A.R."/>
            <person name="Graham D.E."/>
            <person name="Kyrpides N.C."/>
            <person name="Fleischmann R.D."/>
            <person name="Quackenbush J."/>
            <person name="Lee N.H."/>
            <person name="Sutton G.G."/>
            <person name="Gill S.R."/>
            <person name="Kirkness E.F."/>
            <person name="Dougherty B.A."/>
            <person name="McKenney K."/>
            <person name="Adams M.D."/>
            <person name="Loftus B.J."/>
            <person name="Peterson S.N."/>
            <person name="Reich C.I."/>
            <person name="McNeil L.K."/>
            <person name="Badger J.H."/>
            <person name="Glodek A."/>
            <person name="Zhou L."/>
            <person name="Overbeek R."/>
            <person name="Gocayne J.D."/>
            <person name="Weidman J.F."/>
            <person name="McDonald L.A."/>
            <person name="Utterback T.R."/>
            <person name="Cotton M.D."/>
            <person name="Spriggs T."/>
            <person name="Artiach P."/>
            <person name="Kaine B.P."/>
            <person name="Sykes S.M."/>
            <person name="Sadow P.W."/>
            <person name="D'Andrea K.P."/>
            <person name="Bowman C."/>
            <person name="Fujii C."/>
            <person name="Garland S.A."/>
            <person name="Mason T.M."/>
            <person name="Olsen G.J."/>
            <person name="Fraser C.M."/>
            <person name="Smith H.O."/>
            <person name="Woese C.R."/>
            <person name="Venter J.C."/>
        </authorList>
    </citation>
    <scope>NUCLEOTIDE SEQUENCE [LARGE SCALE GENOMIC DNA]</scope>
    <source>
        <strain>ATCC 49558 / DSM 4304 / JCM 9628 / NBRC 100126 / VC-16</strain>
    </source>
</reference>
<reference key="2">
    <citation type="journal article" date="2002" name="J. Bacteriol.">
        <title>Novel type of ADP-forming acetyl coenzyme A synthetase in hyperthermophilic archaea: heterologous expression and characterization of isoenzymes from the sulfate reducer Archaeoglobus fulgidus and the methanogen Methanococcus jannaschii.</title>
        <authorList>
            <person name="Musfeldt M."/>
            <person name="Schoenheit P."/>
        </authorList>
    </citation>
    <scope>FUNCTION</scope>
    <scope>CATALYTIC ACTIVITY</scope>
    <scope>ACTIVITY REGULATION</scope>
    <scope>BIOPHYSICOCHEMICAL PROPERTIES</scope>
    <scope>SUBUNIT</scope>
</reference>
<protein>
    <recommendedName>
        <fullName evidence="3">Acetate--CoA ligase [ADP-forming] II</fullName>
        <ecNumber evidence="2">6.2.1.13</ecNumber>
    </recommendedName>
    <alternativeName>
        <fullName evidence="3">ADP-forming acetyl coenzyme A synthetase II</fullName>
        <shortName evidence="3">ACS II</shortName>
    </alternativeName>
</protein>
<name>ACD2_ARCFU</name>
<keyword id="KW-0067">ATP-binding</keyword>
<keyword id="KW-0436">Ligase</keyword>
<keyword id="KW-0547">Nucleotide-binding</keyword>
<keyword id="KW-1185">Reference proteome</keyword>
<evidence type="ECO:0000255" key="1">
    <source>
        <dbReference type="PROSITE-ProRule" id="PRU00409"/>
    </source>
</evidence>
<evidence type="ECO:0000269" key="2">
    <source>
    </source>
</evidence>
<evidence type="ECO:0000305" key="3"/>
<evidence type="ECO:0000312" key="4">
    <source>
        <dbReference type="EMBL" id="AAB89317.1"/>
    </source>
</evidence>
<accession>O28341</accession>
<organism>
    <name type="scientific">Archaeoglobus fulgidus (strain ATCC 49558 / DSM 4304 / JCM 9628 / NBRC 100126 / VC-16)</name>
    <dbReference type="NCBI Taxonomy" id="224325"/>
    <lineage>
        <taxon>Archaea</taxon>
        <taxon>Methanobacteriati</taxon>
        <taxon>Methanobacteriota</taxon>
        <taxon>Archaeoglobi</taxon>
        <taxon>Archaeoglobales</taxon>
        <taxon>Archaeoglobaceae</taxon>
        <taxon>Archaeoglobus</taxon>
    </lineage>
</organism>
<sequence>MLLLEHESKALLEKYGIKTAKCIFCETEEQAVKAAKEIGFPVVMKVAGREIVHKSDVGGVILNVKSEDEVREVFQRLMSIPKAEGVNIQPQLEKGIEVIVGVAENEQFGSVAMFGLGGVFVEVLKDVSFRLLPLTRRDAEEMVREVKGYKLLEGYRRVKGDVGAVVDLLLKLNEVVERESIVEMDLNPVFVYERGAVVADARIVVGERKRFDYTIPDLRDLFYPKSVAVIGASRTVGKPGFNIVWNLKQNGFMGKIYPVNPNADKILELKCYPSILDIPDEVDMAIIAVPAKIVPEVMAECAQKGIKGAVIVSSGFSEEGEKGAEYERRVLEIAKKHGIRIFGPNTTGVLNTENGFITSFAIQPVIKKGNIGIIAQTGLFLGIMMDIVTSNHPSIGFSKIVGMGNKIDVEDYEVLDFLLKDEQTKVIGIYMEGIKNGRAFYDVASSAEKPIVVFKSGRTEYGQKAAMSHTASICGDDDVFDAVCRQANLVRVYSFDELFDVTKAFSLQPLPKGDRVAIIHYTGSGCVQGSDAAYFAGLKLAEFSKDTVDKISEVTPEWHNVNNPIDIWPMVEYYGAFKAYQTAIEAVMEDEGVDSVIACVWANRLINADFEPDYKSLKKYGKPIYFCVEGARDVVFDHKNALELNGIPVYTNVINAVNVLGKVTKYAKRRIQS</sequence>
<proteinExistence type="evidence at protein level"/>
<feature type="chain" id="PRO_0000430519" description="Acetate--CoA ligase [ADP-forming] II">
    <location>
        <begin position="1"/>
        <end position="673"/>
    </location>
</feature>
<feature type="domain" description="ATP-grasp" evidence="1">
    <location>
        <begin position="9"/>
        <end position="45"/>
    </location>
</feature>
<feature type="binding site" evidence="1">
    <location>
        <begin position="35"/>
        <end position="46"/>
    </location>
    <ligand>
        <name>ATP</name>
        <dbReference type="ChEBI" id="CHEBI:30616"/>
    </ligand>
</feature>
<comment type="function">
    <text evidence="2">Catalyzes the reversible conversion of a variety of acids to the corresponding acyl-CoA esters. Shows the highest activity with the aryl acids, indoleacetate and phenylacetate, as compared to acetate. In the reverse direction, phenylacetyl-CoA is the best substrate. Seems to be involved primarily in the degradation of aryl-CoA esters to the corresponding acids. Participates in the degradation of branched-chain amino acids via branched-chain-acyl-CoA esters.</text>
</comment>
<comment type="catalytic activity">
    <reaction evidence="2">
        <text>acetate + ATP + CoA = acetyl-CoA + ADP + phosphate</text>
        <dbReference type="Rhea" id="RHEA:15081"/>
        <dbReference type="ChEBI" id="CHEBI:30089"/>
        <dbReference type="ChEBI" id="CHEBI:30616"/>
        <dbReference type="ChEBI" id="CHEBI:43474"/>
        <dbReference type="ChEBI" id="CHEBI:57287"/>
        <dbReference type="ChEBI" id="CHEBI:57288"/>
        <dbReference type="ChEBI" id="CHEBI:456216"/>
        <dbReference type="EC" id="6.2.1.13"/>
    </reaction>
</comment>
<comment type="activity regulation">
    <text evidence="2">Activity requires divalent metal cations.</text>
</comment>
<comment type="biophysicochemical properties">
    <kinetics>
        <KM evidence="2">17 uM for phenylacetyl-CoA</KM>
        <KM evidence="2">2580 uM for acetate</KM>
        <KM evidence="2">1240 uM for indole-3-acetate</KM>
        <KM evidence="2">2500 uM for phenylacetate</KM>
        <KM evidence="2">30 uM for ATP</KM>
        <KM evidence="2">530 uM for CoA</KM>
        <text evidence="2">kcat is 2.3 sec(-1) for phenylacetyl-CoA. kcat is 1.84 sec(-1) for acetate. kcat is 3.45 sec(-1) for indole-3-acetate. kcat is 3 sec(-1) for phenylacetate. kcat is 3 sec(-1) for ATP. kcat is 2.9 sec(-1) for CoA.</text>
    </kinetics>
</comment>
<comment type="subunit">
    <text evidence="2">Homodimer.</text>
</comment>
<comment type="similarity">
    <text evidence="3">In the N-terminal section; belongs to the acetate CoA ligase beta subunit family.</text>
</comment>
<comment type="similarity">
    <text evidence="3">In the C-terminal section; belongs to the acetate CoA ligase alpha subunit family.</text>
</comment>